<protein>
    <recommendedName>
        <fullName evidence="7">ABC multidrug transporter atrF</fullName>
    </recommendedName>
</protein>
<sequence>MADDHRQPEASSNTAANPYNHPVASEHTLGSLNTTSTSETDASADADARWGERNQGDPVSRRGAMEEFEEMRREVTKLSLHRTRSAKDARRRSRAEGRDEEKALEDEQASSTDEYRGGFDLNEFLMGGHLERRTTAGEPAKKVGVAFKNVTVKGVETGASFVRTLPDAVVGTFGPDLYKIICRFVPALHFGKRPPVRDLLHDFSGAVREGEMMLVLGRPGAGCSTFLKTIANDREAFAGVEGEVSYGGLSAEEQHKHFRGEVNYNQEDDQHFPNLTVWQTLKFSLINKTKKHDKASIPIIIDALLKMFGITHTKNTLVGNEYVRGVSGGERKRVSIAETLATKSSVVCWDNSTRGLDASTALDYAKSLRIMTDVSKRTTLVTLYQAGESIYELMDKVLVIDAGRMLYQGPANEAKQYFVDLGFYCPEQSTTADFLTSLCDPNARQFQPGREASTPKTAEELEAIFKQSEAYKQIWNEVCAYEKLLQDTNQEDTRRFQKTVAQSKSKTVSKKSPYTVSIVRQVAACVQREFWLLWGDKTSLYTKYFIIVSNGLIVSSLFYGESLDTSGAFSRGGALFFSILFLVLQLTELMPAVSGRGIVARHKDYAFYRPSAVAIARVVVDFPAIFCMVVPFTIIVYFMTGLDVEASKFFIYFLFVYTTTFCITSLYRMFAALSPTIDDAVRFAGIALNVLILFVGYVIPKQGLIDGSIWFGWLFYVNPLSYSYEAVLTNEFSNRVMSCAPSQLVPQGPGVDPRYQGCALTGSELGKADVAGSRYLQESFQFTRHHLWRNFGVVIAFTVLYLLVTVIAAEVLSFVGGGGGALVFKKSKRSTKLKAQNGKGNDEEQVQNTGDNAALSRGEAKSSSSGEAMQRLSASDRVFTWSNVEYTVPYGNGTRKLLNGVNGYAKPGLMIALMGASGAGKTTLLNTLAQRQKMGVVTGDMLVDGHPLGTEFQRGTGFCEQMDLHDNTATIREALEFSAILRQDRNTPRQEKLDYVDQIIDLLELEDIQDAIIGSLNVEQKKRVTIGVELAAKPSLLLFLDEPTSGLDSQAAFSIVRFLKKLSQAGQAILCTIHQPSSMLIQQFDMVLALNPGGNTFYFGPIGPEGRDVIKYFADRGVVCPPSKNVAEFILETAAKATKKDGRAIDWNEEWRNSEQNRRILDEIQQIREERSKIPIADKGVEYEFAAPTWTQTVLLTERLFRQYWRDPSYYYGKLFVSVIIGIFNGFTFWMLDNSISSMQNRMFSIFLIILIPPIVLNSIVPKFYINRALWEAREYPSRIYGWFAFCTANVVCEIPMAIVSALIYWLLWYYPVGFPTDSSSAGYVFLMSMLFFLFQASWGQWICAFAPSFTVISNVLPFFFVMVNLFNGIVRPYKDYPVFWKYWMYYVNPVTWWLRGVISSVFPSVDIECASKEATHFDPPPGSTCQQYAGNFVSNIAGVGYLVNPDATEDCQYCPFANGTEYMHTLNVHDGDKWRCFGIFLAFVIINWALVYFFIYTVRVRGWSFGMGYLFGGVGVMIEGVKKVFSKKSEKEQN</sequence>
<organism>
    <name type="scientific">Aspergillus flavus (strain ATCC 200026 / FGSC A1120 / IAM 13836 / NRRL 3357 / JCM 12722 / SRRC 167)</name>
    <dbReference type="NCBI Taxonomy" id="332952"/>
    <lineage>
        <taxon>Eukaryota</taxon>
        <taxon>Fungi</taxon>
        <taxon>Dikarya</taxon>
        <taxon>Ascomycota</taxon>
        <taxon>Pezizomycotina</taxon>
        <taxon>Eurotiomycetes</taxon>
        <taxon>Eurotiomycetidae</taxon>
        <taxon>Eurotiales</taxon>
        <taxon>Aspergillaceae</taxon>
        <taxon>Aspergillus</taxon>
        <taxon>Aspergillus subgen. Circumdati</taxon>
    </lineage>
</organism>
<proteinExistence type="evidence at protein level"/>
<gene>
    <name evidence="7" type="primary">atrF</name>
    <name type="ORF">AFLA_055690</name>
</gene>
<evidence type="ECO:0000255" key="1"/>
<evidence type="ECO:0000255" key="2">
    <source>
        <dbReference type="PROSITE-ProRule" id="PRU00434"/>
    </source>
</evidence>
<evidence type="ECO:0000255" key="3">
    <source>
        <dbReference type="PROSITE-ProRule" id="PRU00498"/>
    </source>
</evidence>
<evidence type="ECO:0000256" key="4">
    <source>
        <dbReference type="SAM" id="MobiDB-lite"/>
    </source>
</evidence>
<evidence type="ECO:0000269" key="5">
    <source>
    </source>
</evidence>
<evidence type="ECO:0000269" key="6">
    <source>
    </source>
</evidence>
<evidence type="ECO:0000303" key="7">
    <source>
    </source>
</evidence>
<evidence type="ECO:0000305" key="8"/>
<evidence type="ECO:0000305" key="9">
    <source>
    </source>
</evidence>
<comment type="function">
    <text evidence="6">Pleiotropic ABC efflux transporter involved in the basal level of azole susceptibility (PubMed:30126960). Confers resistance to voriconazole (PubMed:30126960).</text>
</comment>
<comment type="catalytic activity">
    <reaction evidence="9">
        <text>voriconazole(in) + ATP + H2O = voriconazole(out) + ADP + phosphate + H(+)</text>
        <dbReference type="Rhea" id="RHEA:61912"/>
        <dbReference type="ChEBI" id="CHEBI:10023"/>
        <dbReference type="ChEBI" id="CHEBI:15377"/>
        <dbReference type="ChEBI" id="CHEBI:15378"/>
        <dbReference type="ChEBI" id="CHEBI:30616"/>
        <dbReference type="ChEBI" id="CHEBI:43474"/>
        <dbReference type="ChEBI" id="CHEBI:456216"/>
    </reaction>
    <physiologicalReaction direction="left-to-right" evidence="9">
        <dbReference type="Rhea" id="RHEA:61913"/>
    </physiologicalReaction>
</comment>
<comment type="subcellular location">
    <subcellularLocation>
        <location evidence="9">Cell membrane</location>
        <topology evidence="1">Multi-pass membrane protein</topology>
    </subcellularLocation>
</comment>
<comment type="induction">
    <text evidence="5 6">Expression is highly up-regulated in the presence of miconazole (PubMed:23886435, PubMed:30126960). Expression is controlled by the AP-1-like transcription factor yap1 (PubMed:30126960). The promoter contains a putative Yap1 response element YRE (5'-TTAGTAA-3') from -462 to -456 relative to the start codon (PubMed:30126960).</text>
</comment>
<comment type="disruption phenotype">
    <text evidence="6">Leads to voriconazole sensitivity of the yap1-mutated voriconazole-resistant strain.</text>
</comment>
<comment type="similarity">
    <text evidence="8">Belongs to the ABC transporter superfamily. ABCG family. PDR (TC 3.A.1.205) subfamily.</text>
</comment>
<comment type="sequence caution" evidence="8">
    <conflict type="erroneous gene model prediction">
        <sequence resource="EMBL-CDS" id="EED51306"/>
    </conflict>
</comment>
<keyword id="KW-0067">ATP-binding</keyword>
<keyword id="KW-1003">Cell membrane</keyword>
<keyword id="KW-0325">Glycoprotein</keyword>
<keyword id="KW-0472">Membrane</keyword>
<keyword id="KW-0547">Nucleotide-binding</keyword>
<keyword id="KW-0677">Repeat</keyword>
<keyword id="KW-0812">Transmembrane</keyword>
<keyword id="KW-1133">Transmembrane helix</keyword>
<keyword id="KW-0813">Transport</keyword>
<accession>B8NDS8</accession>
<name>ATRF_ASPFN</name>
<dbReference type="EMBL" id="EQ963477">
    <property type="protein sequence ID" value="EED51306.1"/>
    <property type="status" value="ALT_SEQ"/>
    <property type="molecule type" value="Genomic_DNA"/>
</dbReference>
<dbReference type="RefSeq" id="XP_002378313.1">
    <property type="nucleotide sequence ID" value="XM_002378272.1"/>
</dbReference>
<dbReference type="SMR" id="B8NDS8"/>
<dbReference type="STRING" id="332952.B8NDS8"/>
<dbReference type="GlyCosmos" id="B8NDS8">
    <property type="glycosylation" value="7 sites, No reported glycans"/>
</dbReference>
<dbReference type="EnsemblFungi" id="EED51306">
    <property type="protein sequence ID" value="EED51306"/>
    <property type="gene ID" value="AFLA_055690"/>
</dbReference>
<dbReference type="VEuPathDB" id="FungiDB:AFLA_004604"/>
<dbReference type="eggNOG" id="KOG0065">
    <property type="taxonomic scope" value="Eukaryota"/>
</dbReference>
<dbReference type="HOGENOM" id="CLU_000604_35_4_1"/>
<dbReference type="GO" id="GO:0005886">
    <property type="term" value="C:plasma membrane"/>
    <property type="evidence" value="ECO:0007669"/>
    <property type="project" value="UniProtKB-SubCell"/>
</dbReference>
<dbReference type="GO" id="GO:0140359">
    <property type="term" value="F:ABC-type transporter activity"/>
    <property type="evidence" value="ECO:0007669"/>
    <property type="project" value="InterPro"/>
</dbReference>
<dbReference type="GO" id="GO:0005524">
    <property type="term" value="F:ATP binding"/>
    <property type="evidence" value="ECO:0007669"/>
    <property type="project" value="UniProtKB-KW"/>
</dbReference>
<dbReference type="GO" id="GO:0016887">
    <property type="term" value="F:ATP hydrolysis activity"/>
    <property type="evidence" value="ECO:0007669"/>
    <property type="project" value="InterPro"/>
</dbReference>
<dbReference type="CDD" id="cd03233">
    <property type="entry name" value="ABCG_PDR_domain1"/>
    <property type="match status" value="1"/>
</dbReference>
<dbReference type="CDD" id="cd03232">
    <property type="entry name" value="ABCG_PDR_domain2"/>
    <property type="match status" value="1"/>
</dbReference>
<dbReference type="FunFam" id="3.40.50.300:FF:001650">
    <property type="entry name" value="ABC drug exporter AtrF"/>
    <property type="match status" value="1"/>
</dbReference>
<dbReference type="FunFam" id="3.40.50.300:FF:000054">
    <property type="entry name" value="ABC multidrug transporter atrF"/>
    <property type="match status" value="1"/>
</dbReference>
<dbReference type="Gene3D" id="3.40.50.300">
    <property type="entry name" value="P-loop containing nucleotide triphosphate hydrolases"/>
    <property type="match status" value="2"/>
</dbReference>
<dbReference type="InterPro" id="IPR003593">
    <property type="entry name" value="AAA+_ATPase"/>
</dbReference>
<dbReference type="InterPro" id="IPR013525">
    <property type="entry name" value="ABC2_TM"/>
</dbReference>
<dbReference type="InterPro" id="IPR029481">
    <property type="entry name" value="ABC_trans_N"/>
</dbReference>
<dbReference type="InterPro" id="IPR003439">
    <property type="entry name" value="ABC_transporter-like_ATP-bd"/>
</dbReference>
<dbReference type="InterPro" id="IPR017871">
    <property type="entry name" value="ABC_transporter-like_CS"/>
</dbReference>
<dbReference type="InterPro" id="IPR034001">
    <property type="entry name" value="ABCG_PDR_1"/>
</dbReference>
<dbReference type="InterPro" id="IPR034003">
    <property type="entry name" value="ABCG_PDR_2"/>
</dbReference>
<dbReference type="InterPro" id="IPR027417">
    <property type="entry name" value="P-loop_NTPase"/>
</dbReference>
<dbReference type="InterPro" id="IPR010929">
    <property type="entry name" value="PDR_CDR_ABC"/>
</dbReference>
<dbReference type="PANTHER" id="PTHR19241">
    <property type="entry name" value="ATP-BINDING CASSETTE TRANSPORTER"/>
    <property type="match status" value="1"/>
</dbReference>
<dbReference type="Pfam" id="PF01061">
    <property type="entry name" value="ABC2_membrane"/>
    <property type="match status" value="2"/>
</dbReference>
<dbReference type="Pfam" id="PF00005">
    <property type="entry name" value="ABC_tran"/>
    <property type="match status" value="2"/>
</dbReference>
<dbReference type="Pfam" id="PF14510">
    <property type="entry name" value="ABC_trans_N"/>
    <property type="match status" value="1"/>
</dbReference>
<dbReference type="Pfam" id="PF06422">
    <property type="entry name" value="PDR_CDR"/>
    <property type="match status" value="1"/>
</dbReference>
<dbReference type="SMART" id="SM00382">
    <property type="entry name" value="AAA"/>
    <property type="match status" value="2"/>
</dbReference>
<dbReference type="SUPFAM" id="SSF52540">
    <property type="entry name" value="P-loop containing nucleoside triphosphate hydrolases"/>
    <property type="match status" value="2"/>
</dbReference>
<dbReference type="PROSITE" id="PS00211">
    <property type="entry name" value="ABC_TRANSPORTER_1"/>
    <property type="match status" value="1"/>
</dbReference>
<dbReference type="PROSITE" id="PS50893">
    <property type="entry name" value="ABC_TRANSPORTER_2"/>
    <property type="match status" value="2"/>
</dbReference>
<feature type="chain" id="PRO_0000449469" description="ABC multidrug transporter atrF">
    <location>
        <begin position="1"/>
        <end position="1535"/>
    </location>
</feature>
<feature type="transmembrane region" description="Helical" evidence="1">
    <location>
        <begin position="540"/>
        <end position="560"/>
    </location>
</feature>
<feature type="transmembrane region" description="Helical" evidence="1">
    <location>
        <begin position="573"/>
        <end position="593"/>
    </location>
</feature>
<feature type="transmembrane region" description="Helical" evidence="1">
    <location>
        <begin position="618"/>
        <end position="638"/>
    </location>
</feature>
<feature type="transmembrane region" description="Helical" evidence="1">
    <location>
        <begin position="646"/>
        <end position="666"/>
    </location>
</feature>
<feature type="transmembrane region" description="Helical" evidence="1">
    <location>
        <begin position="680"/>
        <end position="700"/>
    </location>
</feature>
<feature type="transmembrane region" description="Helical" evidence="1">
    <location>
        <begin position="703"/>
        <end position="723"/>
    </location>
</feature>
<feature type="transmembrane region" description="Helical" evidence="1">
    <location>
        <begin position="791"/>
        <end position="811"/>
    </location>
</feature>
<feature type="transmembrane region" description="Helical" evidence="1">
    <location>
        <begin position="1212"/>
        <end position="1232"/>
    </location>
</feature>
<feature type="transmembrane region" description="Helical" evidence="1">
    <location>
        <begin position="1246"/>
        <end position="1266"/>
    </location>
</feature>
<feature type="transmembrane region" description="Helical" evidence="1">
    <location>
        <begin position="1295"/>
        <end position="1315"/>
    </location>
</feature>
<feature type="transmembrane region" description="Helical" evidence="1">
    <location>
        <begin position="1320"/>
        <end position="1340"/>
    </location>
</feature>
<feature type="transmembrane region" description="Helical" evidence="1">
    <location>
        <begin position="1342"/>
        <end position="1362"/>
    </location>
</feature>
<feature type="transmembrane region" description="Helical" evidence="1">
    <location>
        <begin position="1384"/>
        <end position="1406"/>
    </location>
</feature>
<feature type="transmembrane region" description="Helical" evidence="1">
    <location>
        <begin position="1477"/>
        <end position="1497"/>
    </location>
</feature>
<feature type="transmembrane region" description="Helical" evidence="1">
    <location>
        <begin position="1503"/>
        <end position="1523"/>
    </location>
</feature>
<feature type="domain" description="ABC transporter 1" evidence="2">
    <location>
        <begin position="185"/>
        <end position="427"/>
    </location>
</feature>
<feature type="domain" description="ABC transporter 2" evidence="2">
    <location>
        <begin position="879"/>
        <end position="1117"/>
    </location>
</feature>
<feature type="region of interest" description="Disordered" evidence="4">
    <location>
        <begin position="1"/>
        <end position="115"/>
    </location>
</feature>
<feature type="region of interest" description="Disordered" evidence="4">
    <location>
        <begin position="834"/>
        <end position="868"/>
    </location>
</feature>
<feature type="compositionally biased region" description="Low complexity" evidence="4">
    <location>
        <begin position="34"/>
        <end position="45"/>
    </location>
</feature>
<feature type="compositionally biased region" description="Basic and acidic residues" evidence="4">
    <location>
        <begin position="46"/>
        <end position="76"/>
    </location>
</feature>
<feature type="compositionally biased region" description="Basic residues" evidence="4">
    <location>
        <begin position="79"/>
        <end position="93"/>
    </location>
</feature>
<feature type="binding site" evidence="2">
    <location>
        <begin position="915"/>
        <end position="922"/>
    </location>
    <ligand>
        <name>ATP</name>
        <dbReference type="ChEBI" id="CHEBI:30616"/>
    </ligand>
</feature>
<feature type="glycosylation site" description="N-linked (GlcNAc...) asparagine" evidence="3">
    <location>
        <position position="33"/>
    </location>
</feature>
<feature type="glycosylation site" description="N-linked (GlcNAc...) asparagine" evidence="3">
    <location>
        <position position="149"/>
    </location>
</feature>
<feature type="glycosylation site" description="N-linked (GlcNAc...) asparagine" evidence="3">
    <location>
        <position position="274"/>
    </location>
</feature>
<feature type="glycosylation site" description="N-linked (GlcNAc...) asparagine" evidence="3">
    <location>
        <position position="287"/>
    </location>
</feature>
<feature type="glycosylation site" description="N-linked (GlcNAc...) asparagine" evidence="3">
    <location>
        <position position="351"/>
    </location>
</feature>
<feature type="glycosylation site" description="N-linked (GlcNAc...) asparagine" evidence="3">
    <location>
        <position position="892"/>
    </location>
</feature>
<feature type="glycosylation site" description="N-linked (GlcNAc...) asparagine" evidence="3">
    <location>
        <position position="1459"/>
    </location>
</feature>
<reference key="1">
    <citation type="journal article" date="2015" name="Genome Announc.">
        <title>Genome sequence of Aspergillus flavus NRRL 3357, a strain that causes aflatoxin contamination of food and feed.</title>
        <authorList>
            <person name="Nierman W.C."/>
            <person name="Yu J."/>
            <person name="Fedorova-Abrams N.D."/>
            <person name="Losada L."/>
            <person name="Cleveland T.E."/>
            <person name="Bhatnagar D."/>
            <person name="Bennett J.W."/>
            <person name="Dean R."/>
            <person name="Payne G.A."/>
        </authorList>
    </citation>
    <scope>NUCLEOTIDE SEQUENCE [LARGE SCALE GENOMIC DNA]</scope>
    <source>
        <strain>ATCC 200026 / FGSC A1120 / IAM 13836 / NRRL 3357 / JCM 12722 / SRRC 167</strain>
    </source>
</reference>
<reference key="2">
    <citation type="journal article" date="2013" name="Diagn. Microbiol. Infect. Dis.">
        <title>Differential expression of ATP-binding cassette and/or major facilitator superfamily class efflux pumps contributes to voriconazole resistance in Aspergillus flavus.</title>
        <authorList>
            <person name="Natesan S.K."/>
            <person name="Lamichchane A.K."/>
            <person name="Swaminathan S."/>
            <person name="Wu W."/>
        </authorList>
    </citation>
    <scope>INDUCTION</scope>
</reference>
<reference key="3">
    <citation type="journal article" date="2018" name="Antimicrob. Agents Chemother.">
        <title>Contributions of yap1 mutation and subsequent atrF upregulation to voriconazole resistance in Aspergillus flavus.</title>
        <authorList>
            <person name="Ukai Y."/>
            <person name="Kuroiwa M."/>
            <person name="Kurihara N."/>
            <person name="Naruse H."/>
            <person name="Homma T."/>
            <person name="Maki H."/>
            <person name="Naito A."/>
        </authorList>
    </citation>
    <scope>INDUCTION</scope>
    <scope>FUNCTION</scope>
    <scope>CATALYTIC ACTIVITY</scope>
    <scope>DISRUPTION PHENOTYPE</scope>
</reference>